<comment type="function">
    <text evidence="3 4 5">Functions in inorganic phosphate uptake, although probably not the main uptake protein under phosphate starvation (PubMed:15731097, PubMed:20933472). Part of the ABC transporter complex PstSACB involved in phosphate import (Probable).</text>
</comment>
<comment type="subunit">
    <text evidence="5">The complex is composed of two ATP-binding proteins (PstB), two transmembrane proteins (PstC and PstA) and a solute-binding protein (PstS).</text>
</comment>
<comment type="subcellular location">
    <subcellularLocation>
        <location evidence="5">Cell membrane</location>
        <topology evidence="5">Lipid-anchor</topology>
    </subcellularLocation>
</comment>
<comment type="induction">
    <text evidence="4">Transcription not induced by phosphate starvation, protein levels do not increase either (at protein level). Part of the pstS2-pknD operon.</text>
</comment>
<comment type="disruption phenotype">
    <text evidence="3 4">No growth phenotype in phosphate-rich medium (3.6 mM Pi) (PubMed:15731097). In restricted medium (Sauton) grows better than wild-type even after nutrient starvation (PubMed:20933472). Decreased phosphate uptake in phosphate-depleted medium (PubMed:15731097). Decreased growth in infected BALB/c and C57BL/6 mice for up to 5 months after infection (PubMed:15731097).</text>
</comment>
<comment type="similarity">
    <text evidence="5">Belongs to the PstS family.</text>
</comment>
<protein>
    <recommendedName>
        <fullName>Phosphate-binding protein PstS 2</fullName>
        <shortName>PBP 2</shortName>
        <shortName>PstS-2</shortName>
    </recommendedName>
</protein>
<keyword id="KW-1003">Cell membrane</keyword>
<keyword id="KW-0449">Lipoprotein</keyword>
<keyword id="KW-0472">Membrane</keyword>
<keyword id="KW-0564">Palmitate</keyword>
<keyword id="KW-0592">Phosphate transport</keyword>
<keyword id="KW-1185">Reference proteome</keyword>
<keyword id="KW-0732">Signal</keyword>
<keyword id="KW-0813">Transport</keyword>
<keyword id="KW-0843">Virulence</keyword>
<organism>
    <name type="scientific">Mycobacterium tuberculosis (strain ATCC 25618 / H37Rv)</name>
    <dbReference type="NCBI Taxonomy" id="83332"/>
    <lineage>
        <taxon>Bacteria</taxon>
        <taxon>Bacillati</taxon>
        <taxon>Actinomycetota</taxon>
        <taxon>Actinomycetes</taxon>
        <taxon>Mycobacteriales</taxon>
        <taxon>Mycobacteriaceae</taxon>
        <taxon>Mycobacterium</taxon>
        <taxon>Mycobacterium tuberculosis complex</taxon>
    </lineage>
</organism>
<sequence>MKFARSGAAVSLLAAGTLVLTACGGGTNSSSSGAGGTSGSVHCGGKKELHSSGSTAQENAMEQFVYAYVRSCPGYTLDYNANGSGAGVTQFLNNETDFAGSDVPLNPSTGQPDRSAERCGSPAWDLPTVFGPIAITYNIKGVSTLNLDGPTTAKIFNGTITVWNDPQIQALNSGTDLPPTPISVIFRSDKSGTSDNFQKYLDGASNGAWGKGASETFNGGVGVGASGNNGTSALLQTTDGSITYNEWSFAVGKQLNMAQIITSAGPDPVAITTESVGKTIAGAKIMGQGNDLVLDTSSFYRPTQPGSYPIVLATYEIVCSKYPDATTGTAVRAFMQAAIGPGQEGLDQYGSIPLPKSFQAKLAAAVNAIS</sequence>
<gene>
    <name type="primary">pstS2</name>
    <name type="ordered locus">Rv0932c</name>
    <name type="ORF">MTCY08D9.07</name>
</gene>
<feature type="signal peptide" evidence="2">
    <location>
        <begin position="1"/>
        <end position="22"/>
    </location>
</feature>
<feature type="chain" id="PRO_0000031855" description="Phosphate-binding protein PstS 2">
    <location>
        <begin position="23"/>
        <end position="370"/>
    </location>
</feature>
<feature type="binding site" evidence="1">
    <location>
        <begin position="54"/>
        <end position="56"/>
    </location>
    <ligand>
        <name>phosphate</name>
        <dbReference type="ChEBI" id="CHEBI:43474"/>
    </ligand>
</feature>
<feature type="binding site" evidence="1">
    <location>
        <position position="84"/>
    </location>
    <ligand>
        <name>phosphate</name>
        <dbReference type="ChEBI" id="CHEBI:43474"/>
    </ligand>
</feature>
<feature type="binding site" evidence="1">
    <location>
        <position position="102"/>
    </location>
    <ligand>
        <name>phosphate</name>
        <dbReference type="ChEBI" id="CHEBI:43474"/>
    </ligand>
</feature>
<feature type="binding site" evidence="1">
    <location>
        <begin position="191"/>
        <end position="193"/>
    </location>
    <ligand>
        <name>phosphate</name>
        <dbReference type="ChEBI" id="CHEBI:43474"/>
    </ligand>
</feature>
<feature type="lipid moiety-binding region" description="N-palmitoyl cysteine" evidence="2">
    <location>
        <position position="23"/>
    </location>
</feature>
<feature type="lipid moiety-binding region" description="S-diacylglycerol cysteine" evidence="2">
    <location>
        <position position="23"/>
    </location>
</feature>
<dbReference type="EMBL" id="Z48056">
    <property type="protein sequence ID" value="CAA88137.1"/>
    <property type="molecule type" value="Genomic_DNA"/>
</dbReference>
<dbReference type="EMBL" id="AL123456">
    <property type="protein sequence ID" value="CCP43680.1"/>
    <property type="molecule type" value="Genomic_DNA"/>
</dbReference>
<dbReference type="PIR" id="D70584">
    <property type="entry name" value="D70584"/>
</dbReference>
<dbReference type="RefSeq" id="YP_177769.1">
    <property type="nucleotide sequence ID" value="NC_000962.3"/>
</dbReference>
<dbReference type="SMR" id="P9WGT9"/>
<dbReference type="FunCoup" id="P9WGT9">
    <property type="interactions" value="138"/>
</dbReference>
<dbReference type="STRING" id="83332.Rv0932c"/>
<dbReference type="PaxDb" id="83332-Rv0932c"/>
<dbReference type="DNASU" id="885613"/>
<dbReference type="GeneID" id="885613"/>
<dbReference type="KEGG" id="mtu:Rv0932c"/>
<dbReference type="KEGG" id="mtv:RVBD_0932c"/>
<dbReference type="TubercuList" id="Rv0932c"/>
<dbReference type="eggNOG" id="COG0226">
    <property type="taxonomic scope" value="Bacteria"/>
</dbReference>
<dbReference type="InParanoid" id="P9WGT9"/>
<dbReference type="OrthoDB" id="9801510at2"/>
<dbReference type="PhylomeDB" id="P9WGT9"/>
<dbReference type="Proteomes" id="UP000001584">
    <property type="component" value="Chromosome"/>
</dbReference>
<dbReference type="GO" id="GO:0043190">
    <property type="term" value="C:ATP-binding cassette (ABC) transporter complex"/>
    <property type="evidence" value="ECO:0007669"/>
    <property type="project" value="InterPro"/>
</dbReference>
<dbReference type="GO" id="GO:0005576">
    <property type="term" value="C:extracellular region"/>
    <property type="evidence" value="ECO:0007005"/>
    <property type="project" value="MTBBASE"/>
</dbReference>
<dbReference type="GO" id="GO:0005886">
    <property type="term" value="C:plasma membrane"/>
    <property type="evidence" value="ECO:0000314"/>
    <property type="project" value="MTBBASE"/>
</dbReference>
<dbReference type="GO" id="GO:0042301">
    <property type="term" value="F:phosphate ion binding"/>
    <property type="evidence" value="ECO:0007669"/>
    <property type="project" value="InterPro"/>
</dbReference>
<dbReference type="GO" id="GO:0035435">
    <property type="term" value="P:phosphate ion transmembrane transport"/>
    <property type="evidence" value="ECO:0007669"/>
    <property type="project" value="InterPro"/>
</dbReference>
<dbReference type="GO" id="GO:0006817">
    <property type="term" value="P:phosphate ion transport"/>
    <property type="evidence" value="ECO:0000315"/>
    <property type="project" value="MTBBASE"/>
</dbReference>
<dbReference type="CDD" id="cd13565">
    <property type="entry name" value="PBP2_PstS"/>
    <property type="match status" value="1"/>
</dbReference>
<dbReference type="Gene3D" id="3.40.190.10">
    <property type="entry name" value="Periplasmic binding protein-like II"/>
    <property type="match status" value="2"/>
</dbReference>
<dbReference type="InterPro" id="IPR005673">
    <property type="entry name" value="ABC_phos-bd_PstS"/>
</dbReference>
<dbReference type="InterPro" id="IPR024370">
    <property type="entry name" value="PBP_domain"/>
</dbReference>
<dbReference type="InterPro" id="IPR050962">
    <property type="entry name" value="Phosphate-bind_PstS"/>
</dbReference>
<dbReference type="NCBIfam" id="TIGR00975">
    <property type="entry name" value="3a0107s03"/>
    <property type="match status" value="1"/>
</dbReference>
<dbReference type="PANTHER" id="PTHR42996">
    <property type="entry name" value="PHOSPHATE-BINDING PROTEIN PSTS"/>
    <property type="match status" value="1"/>
</dbReference>
<dbReference type="PANTHER" id="PTHR42996:SF1">
    <property type="entry name" value="PHOSPHATE-BINDING PROTEIN PSTS"/>
    <property type="match status" value="1"/>
</dbReference>
<dbReference type="Pfam" id="PF12849">
    <property type="entry name" value="PBP_like_2"/>
    <property type="match status" value="1"/>
</dbReference>
<dbReference type="PIRSF" id="PIRSF002756">
    <property type="entry name" value="PstS"/>
    <property type="match status" value="1"/>
</dbReference>
<dbReference type="SUPFAM" id="SSF53850">
    <property type="entry name" value="Periplasmic binding protein-like II"/>
    <property type="match status" value="1"/>
</dbReference>
<dbReference type="PROSITE" id="PS51257">
    <property type="entry name" value="PROKAR_LIPOPROTEIN"/>
    <property type="match status" value="1"/>
</dbReference>
<accession>P9WGT9</accession>
<accession>L0T576</accession>
<accession>O05870</accession>
<accession>P96905</accession>
<reference key="1">
    <citation type="journal article" date="1997" name="J. Bacteriol.">
        <title>Three different putative phosphate transport receptors are encoded by the Mycobacterium tuberculosis genome and are present at the surface of Mycobacterium bovis BCG.</title>
        <authorList>
            <person name="Lefevre P."/>
            <person name="Braibant M."/>
            <person name="de Wit L."/>
            <person name="Kalai M."/>
            <person name="Roeper D."/>
            <person name="Groetzinger J."/>
            <person name="Delville J.-P."/>
            <person name="Peirs P."/>
            <person name="Ooms J."/>
            <person name="Huygen K."/>
            <person name="Content J."/>
        </authorList>
    </citation>
    <scope>NUCLEOTIDE SEQUENCE [GENOMIC DNA]</scope>
    <scope>CHARACTERIZATION</scope>
    <source>
        <strain>ATCC 35801 / TMC 107 / Erdman</strain>
    </source>
</reference>
<reference key="2">
    <citation type="submission" date="1997-01" db="EMBL/GenBank/DDBJ databases">
        <authorList>
            <person name="Content J."/>
        </authorList>
    </citation>
    <scope>SEQUENCE REVISION TO 361</scope>
</reference>
<reference key="3">
    <citation type="journal article" date="1998" name="Nature">
        <title>Deciphering the biology of Mycobacterium tuberculosis from the complete genome sequence.</title>
        <authorList>
            <person name="Cole S.T."/>
            <person name="Brosch R."/>
            <person name="Parkhill J."/>
            <person name="Garnier T."/>
            <person name="Churcher C.M."/>
            <person name="Harris D.E."/>
            <person name="Gordon S.V."/>
            <person name="Eiglmeier K."/>
            <person name="Gas S."/>
            <person name="Barry C.E. III"/>
            <person name="Tekaia F."/>
            <person name="Badcock K."/>
            <person name="Basham D."/>
            <person name="Brown D."/>
            <person name="Chillingworth T."/>
            <person name="Connor R."/>
            <person name="Davies R.M."/>
            <person name="Devlin K."/>
            <person name="Feltwell T."/>
            <person name="Gentles S."/>
            <person name="Hamlin N."/>
            <person name="Holroyd S."/>
            <person name="Hornsby T."/>
            <person name="Jagels K."/>
            <person name="Krogh A."/>
            <person name="McLean J."/>
            <person name="Moule S."/>
            <person name="Murphy L.D."/>
            <person name="Oliver S."/>
            <person name="Osborne J."/>
            <person name="Quail M.A."/>
            <person name="Rajandream M.A."/>
            <person name="Rogers J."/>
            <person name="Rutter S."/>
            <person name="Seeger K."/>
            <person name="Skelton S."/>
            <person name="Squares S."/>
            <person name="Squares R."/>
            <person name="Sulston J.E."/>
            <person name="Taylor K."/>
            <person name="Whitehead S."/>
            <person name="Barrell B.G."/>
        </authorList>
    </citation>
    <scope>NUCLEOTIDE SEQUENCE [LARGE SCALE GENOMIC DNA]</scope>
    <source>
        <strain>ATCC 25618 / H37Rv</strain>
    </source>
</reference>
<reference key="4">
    <citation type="journal article" date="2005" name="Infect. Immun.">
        <title>Mycobacterium tuberculosis with disruption in genes encoding the phosphate binding proteins PstS1 and PstS2 is deficient in phosphate uptake and demonstrates reduced in vivo virulence.</title>
        <authorList>
            <person name="Peirs P."/>
            <person name="Lefevre P."/>
            <person name="Boarbi S."/>
            <person name="Wang X.M."/>
            <person name="Denis O."/>
            <person name="Braibant M."/>
            <person name="Pethe K."/>
            <person name="Locht C."/>
            <person name="Huygen K."/>
            <person name="Content J."/>
        </authorList>
    </citation>
    <scope>FUNCTION</scope>
    <scope>DISRUPTION PHENOTYPE</scope>
    <source>
        <strain>H37Rv</strain>
    </source>
</reference>
<reference key="5">
    <citation type="journal article" date="2010" name="Tuberculosis">
        <title>Effect of PstS sub-units or PknD deficiency on the survival of Mycobacterium tuberculosis.</title>
        <authorList>
            <person name="Vanzembergh F."/>
            <person name="Peirs P."/>
            <person name="Lefevre P."/>
            <person name="Celio N."/>
            <person name="Mathys V."/>
            <person name="Content J."/>
            <person name="Kalai M."/>
        </authorList>
    </citation>
    <scope>FUNCTION</scope>
    <scope>INDUCTION</scope>
    <scope>DISRUPTION PHENOTYPE</scope>
    <source>
        <strain>H37Rv</strain>
    </source>
</reference>
<reference key="6">
    <citation type="journal article" date="2011" name="Mol. Cell. Proteomics">
        <title>Proteogenomic analysis of Mycobacterium tuberculosis by high resolution mass spectrometry.</title>
        <authorList>
            <person name="Kelkar D.S."/>
            <person name="Kumar D."/>
            <person name="Kumar P."/>
            <person name="Balakrishnan L."/>
            <person name="Muthusamy B."/>
            <person name="Yadav A.K."/>
            <person name="Shrivastava P."/>
            <person name="Marimuthu A."/>
            <person name="Anand S."/>
            <person name="Sundaram H."/>
            <person name="Kingsbury R."/>
            <person name="Harsha H.C."/>
            <person name="Nair B."/>
            <person name="Prasad T.S."/>
            <person name="Chauhan D.S."/>
            <person name="Katoch K."/>
            <person name="Katoch V.M."/>
            <person name="Kumar P."/>
            <person name="Chaerkady R."/>
            <person name="Ramachandran S."/>
            <person name="Dash D."/>
            <person name="Pandey A."/>
        </authorList>
    </citation>
    <scope>IDENTIFICATION BY MASS SPECTROMETRY [LARGE SCALE ANALYSIS]</scope>
    <source>
        <strain>ATCC 25618 / H37Rv</strain>
    </source>
</reference>
<evidence type="ECO:0000250" key="1">
    <source>
        <dbReference type="UniProtKB" id="P9WGT7"/>
    </source>
</evidence>
<evidence type="ECO:0000255" key="2">
    <source>
        <dbReference type="PROSITE-ProRule" id="PRU00303"/>
    </source>
</evidence>
<evidence type="ECO:0000269" key="3">
    <source>
    </source>
</evidence>
<evidence type="ECO:0000269" key="4">
    <source>
    </source>
</evidence>
<evidence type="ECO:0000305" key="5"/>
<proteinExistence type="evidence at protein level"/>
<name>PSTS2_MYCTU</name>